<reference key="1">
    <citation type="journal article" date="2006" name="Nature">
        <title>The DNA sequence, annotation and analysis of human chromosome 3.</title>
        <authorList>
            <person name="Muzny D.M."/>
            <person name="Scherer S.E."/>
            <person name="Kaul R."/>
            <person name="Wang J."/>
            <person name="Yu J."/>
            <person name="Sudbrak R."/>
            <person name="Buhay C.J."/>
            <person name="Chen R."/>
            <person name="Cree A."/>
            <person name="Ding Y."/>
            <person name="Dugan-Rocha S."/>
            <person name="Gill R."/>
            <person name="Gunaratne P."/>
            <person name="Harris R.A."/>
            <person name="Hawes A.C."/>
            <person name="Hernandez J."/>
            <person name="Hodgson A.V."/>
            <person name="Hume J."/>
            <person name="Jackson A."/>
            <person name="Khan Z.M."/>
            <person name="Kovar-Smith C."/>
            <person name="Lewis L.R."/>
            <person name="Lozado R.J."/>
            <person name="Metzker M.L."/>
            <person name="Milosavljevic A."/>
            <person name="Miner G.R."/>
            <person name="Morgan M.B."/>
            <person name="Nazareth L.V."/>
            <person name="Scott G."/>
            <person name="Sodergren E."/>
            <person name="Song X.-Z."/>
            <person name="Steffen D."/>
            <person name="Wei S."/>
            <person name="Wheeler D.A."/>
            <person name="Wright M.W."/>
            <person name="Worley K.C."/>
            <person name="Yuan Y."/>
            <person name="Zhang Z."/>
            <person name="Adams C.Q."/>
            <person name="Ansari-Lari M.A."/>
            <person name="Ayele M."/>
            <person name="Brown M.J."/>
            <person name="Chen G."/>
            <person name="Chen Z."/>
            <person name="Clendenning J."/>
            <person name="Clerc-Blankenburg K.P."/>
            <person name="Chen R."/>
            <person name="Chen Z."/>
            <person name="Davis C."/>
            <person name="Delgado O."/>
            <person name="Dinh H.H."/>
            <person name="Dong W."/>
            <person name="Draper H."/>
            <person name="Ernst S."/>
            <person name="Fu G."/>
            <person name="Gonzalez-Garay M.L."/>
            <person name="Garcia D.K."/>
            <person name="Gillett W."/>
            <person name="Gu J."/>
            <person name="Hao B."/>
            <person name="Haugen E."/>
            <person name="Havlak P."/>
            <person name="He X."/>
            <person name="Hennig S."/>
            <person name="Hu S."/>
            <person name="Huang W."/>
            <person name="Jackson L.R."/>
            <person name="Jacob L.S."/>
            <person name="Kelly S.H."/>
            <person name="Kube M."/>
            <person name="Levy R."/>
            <person name="Li Z."/>
            <person name="Liu B."/>
            <person name="Liu J."/>
            <person name="Liu W."/>
            <person name="Lu J."/>
            <person name="Maheshwari M."/>
            <person name="Nguyen B.-V."/>
            <person name="Okwuonu G.O."/>
            <person name="Palmeiri A."/>
            <person name="Pasternak S."/>
            <person name="Perez L.M."/>
            <person name="Phelps K.A."/>
            <person name="Plopper F.J."/>
            <person name="Qiang B."/>
            <person name="Raymond C."/>
            <person name="Rodriguez R."/>
            <person name="Saenphimmachak C."/>
            <person name="Santibanez J."/>
            <person name="Shen H."/>
            <person name="Shen Y."/>
            <person name="Subramanian S."/>
            <person name="Tabor P.E."/>
            <person name="Verduzco D."/>
            <person name="Waldron L."/>
            <person name="Wang J."/>
            <person name="Wang J."/>
            <person name="Wang Q."/>
            <person name="Williams G.A."/>
            <person name="Wong G.K.-S."/>
            <person name="Yao Z."/>
            <person name="Zhang J."/>
            <person name="Zhang X."/>
            <person name="Zhao G."/>
            <person name="Zhou J."/>
            <person name="Zhou Y."/>
            <person name="Nelson D."/>
            <person name="Lehrach H."/>
            <person name="Reinhardt R."/>
            <person name="Naylor S.L."/>
            <person name="Yang H."/>
            <person name="Olson M."/>
            <person name="Weinstock G."/>
            <person name="Gibbs R.A."/>
        </authorList>
    </citation>
    <scope>NUCLEOTIDE SEQUENCE [LARGE SCALE GENOMIC DNA]</scope>
</reference>
<reference key="2">
    <citation type="submission" date="2000-01" db="EMBL/GenBank/DDBJ databases">
        <title>Identification of C2H2 zinc finger factor sequences in human heart.</title>
        <authorList>
            <person name="Brand N.J."/>
            <person name="Mullen A.J."/>
            <person name="Barton P.J.R."/>
        </authorList>
    </citation>
    <scope>NUCLEOTIDE SEQUENCE [MRNA] OF 393-697</scope>
    <source>
        <tissue>Muscle</tissue>
    </source>
</reference>
<keyword id="KW-0238">DNA-binding</keyword>
<keyword id="KW-0479">Metal-binding</keyword>
<keyword id="KW-0539">Nucleus</keyword>
<keyword id="KW-1267">Proteomics identification</keyword>
<keyword id="KW-1185">Reference proteome</keyword>
<keyword id="KW-0677">Repeat</keyword>
<keyword id="KW-0804">Transcription</keyword>
<keyword id="KW-0805">Transcription regulation</keyword>
<keyword id="KW-0862">Zinc</keyword>
<keyword id="KW-0863">Zinc-finger</keyword>
<protein>
    <recommendedName>
        <fullName evidence="4">Zinc finger protein 717</fullName>
    </recommendedName>
    <alternativeName>
        <fullName>Krueppel-like factor X17</fullName>
    </alternativeName>
</protein>
<dbReference type="EMBL" id="AC108724">
    <property type="status" value="NOT_ANNOTATED_CDS"/>
    <property type="molecule type" value="Genomic_DNA"/>
</dbReference>
<dbReference type="EMBL" id="AC133123">
    <property type="status" value="NOT_ANNOTATED_CDS"/>
    <property type="molecule type" value="Genomic_DNA"/>
</dbReference>
<dbReference type="EMBL" id="AF226994">
    <property type="protein sequence ID" value="AAK28319.1"/>
    <property type="status" value="ALT_FRAME"/>
    <property type="molecule type" value="mRNA"/>
</dbReference>
<dbReference type="RefSeq" id="NP_001121695.1">
    <property type="nucleotide sequence ID" value="NM_001128223.3"/>
</dbReference>
<dbReference type="RefSeq" id="NP_001277137.1">
    <property type="nucleotide sequence ID" value="NM_001290208.3"/>
</dbReference>
<dbReference type="RefSeq" id="XP_005264768.1">
    <property type="nucleotide sequence ID" value="XM_005264711.5"/>
</dbReference>
<dbReference type="RefSeq" id="XP_047302994.1">
    <property type="nucleotide sequence ID" value="XM_047447038.1"/>
</dbReference>
<dbReference type="RefSeq" id="XP_047302995.1">
    <property type="nucleotide sequence ID" value="XM_047447039.1"/>
</dbReference>
<dbReference type="SMR" id="Q9BY31"/>
<dbReference type="FunCoup" id="Q9BY31">
    <property type="interactions" value="54"/>
</dbReference>
<dbReference type="IntAct" id="Q9BY31">
    <property type="interactions" value="1"/>
</dbReference>
<dbReference type="STRING" id="9606.ENSP00000419377"/>
<dbReference type="iPTMnet" id="Q9BY31"/>
<dbReference type="PhosphoSitePlus" id="Q9BY31"/>
<dbReference type="BioMuta" id="ZNF717"/>
<dbReference type="DMDM" id="189041707"/>
<dbReference type="jPOST" id="Q9BY31"/>
<dbReference type="MassIVE" id="Q9BY31"/>
<dbReference type="PaxDb" id="9606-ENSP00000418187"/>
<dbReference type="PeptideAtlas" id="Q9BY31"/>
<dbReference type="ProteomicsDB" id="79571"/>
<dbReference type="Antibodypedia" id="51978">
    <property type="antibodies" value="5 antibodies from 4 providers"/>
</dbReference>
<dbReference type="DNASU" id="100131827"/>
<dbReference type="Ensembl" id="ENST00000652011.2">
    <property type="protein sequence ID" value="ENSP00000498738.1"/>
    <property type="gene ID" value="ENSG00000227124.11"/>
</dbReference>
<dbReference type="GeneID" id="100131827"/>
<dbReference type="KEGG" id="hsa:100131827"/>
<dbReference type="MANE-Select" id="ENST00000652011.2">
    <property type="protein sequence ID" value="ENSP00000498738.1"/>
    <property type="RefSeq nucleotide sequence ID" value="NM_001290208.3"/>
    <property type="RefSeq protein sequence ID" value="NP_001277137.1"/>
</dbReference>
<dbReference type="AGR" id="HGNC:29448"/>
<dbReference type="CTD" id="100131827"/>
<dbReference type="DisGeNET" id="100131827"/>
<dbReference type="GeneCards" id="ZNF717"/>
<dbReference type="HGNC" id="HGNC:29448">
    <property type="gene designation" value="ZNF717"/>
</dbReference>
<dbReference type="HPA" id="ENSG00000227124">
    <property type="expression patterns" value="Low tissue specificity"/>
</dbReference>
<dbReference type="MalaCards" id="ZNF717"/>
<dbReference type="neXtProt" id="NX_Q9BY31"/>
<dbReference type="OpenTargets" id="ENSG00000227124"/>
<dbReference type="VEuPathDB" id="HostDB:ENSG00000227124"/>
<dbReference type="GeneTree" id="ENSGT00940000164367"/>
<dbReference type="InParanoid" id="Q9BY31"/>
<dbReference type="OMA" id="PFQCNEQ"/>
<dbReference type="OrthoDB" id="9531400at2759"/>
<dbReference type="PAN-GO" id="Q9BY31">
    <property type="GO annotations" value="4 GO annotations based on evolutionary models"/>
</dbReference>
<dbReference type="PhylomeDB" id="Q9BY31"/>
<dbReference type="PathwayCommons" id="Q9BY31"/>
<dbReference type="Reactome" id="R-HSA-212436">
    <property type="pathway name" value="Generic Transcription Pathway"/>
</dbReference>
<dbReference type="SignaLink" id="Q9BY31"/>
<dbReference type="ChiTaRS" id="ZNF717">
    <property type="organism name" value="human"/>
</dbReference>
<dbReference type="Pharos" id="Q9BY31">
    <property type="development level" value="Tdark"/>
</dbReference>
<dbReference type="PRO" id="PR:Q9BY31"/>
<dbReference type="Proteomes" id="UP000005640">
    <property type="component" value="Chromosome 3"/>
</dbReference>
<dbReference type="RNAct" id="Q9BY31">
    <property type="molecule type" value="protein"/>
</dbReference>
<dbReference type="GO" id="GO:0005634">
    <property type="term" value="C:nucleus"/>
    <property type="evidence" value="ECO:0000318"/>
    <property type="project" value="GO_Central"/>
</dbReference>
<dbReference type="GO" id="GO:0003677">
    <property type="term" value="F:DNA binding"/>
    <property type="evidence" value="ECO:0007669"/>
    <property type="project" value="UniProtKB-KW"/>
</dbReference>
<dbReference type="GO" id="GO:0008270">
    <property type="term" value="F:zinc ion binding"/>
    <property type="evidence" value="ECO:0007669"/>
    <property type="project" value="UniProtKB-KW"/>
</dbReference>
<dbReference type="GO" id="GO:0006357">
    <property type="term" value="P:regulation of transcription by RNA polymerase II"/>
    <property type="evidence" value="ECO:0000318"/>
    <property type="project" value="GO_Central"/>
</dbReference>
<dbReference type="CDD" id="cd07765">
    <property type="entry name" value="KRAB_A-box"/>
    <property type="match status" value="1"/>
</dbReference>
<dbReference type="FunFam" id="3.30.160.60:FF:000012">
    <property type="entry name" value="RB-associated KRAB zinc finger protein-like"/>
    <property type="match status" value="1"/>
</dbReference>
<dbReference type="FunFam" id="3.30.160.60:FF:000955">
    <property type="entry name" value="Zinc finger and SCAN domain-containing protein 21"/>
    <property type="match status" value="1"/>
</dbReference>
<dbReference type="FunFam" id="3.30.160.60:FF:000295">
    <property type="entry name" value="zinc finger protein 19"/>
    <property type="match status" value="2"/>
</dbReference>
<dbReference type="FunFam" id="3.30.160.60:FF:001530">
    <property type="entry name" value="Zinc finger protein 268"/>
    <property type="match status" value="2"/>
</dbReference>
<dbReference type="FunFam" id="3.30.160.60:FF:000003">
    <property type="entry name" value="Zinc finger protein 3 homolog"/>
    <property type="match status" value="1"/>
</dbReference>
<dbReference type="FunFam" id="3.30.160.60:FF:002343">
    <property type="entry name" value="Zinc finger protein 33A"/>
    <property type="match status" value="6"/>
</dbReference>
<dbReference type="FunFam" id="3.30.160.60:FF:000016">
    <property type="entry name" value="zinc finger protein 37 homolog"/>
    <property type="match status" value="2"/>
</dbReference>
<dbReference type="FunFam" id="3.30.160.60:FF:002004">
    <property type="entry name" value="Zinc finger protein 473"/>
    <property type="match status" value="1"/>
</dbReference>
<dbReference type="FunFam" id="3.30.160.60:FF:001157">
    <property type="entry name" value="Zinc finger protein 793"/>
    <property type="match status" value="2"/>
</dbReference>
<dbReference type="Gene3D" id="6.10.140.140">
    <property type="match status" value="1"/>
</dbReference>
<dbReference type="Gene3D" id="3.30.160.60">
    <property type="entry name" value="Classic Zinc Finger"/>
    <property type="match status" value="21"/>
</dbReference>
<dbReference type="InterPro" id="IPR001909">
    <property type="entry name" value="KRAB"/>
</dbReference>
<dbReference type="InterPro" id="IPR036051">
    <property type="entry name" value="KRAB_dom_sf"/>
</dbReference>
<dbReference type="InterPro" id="IPR036236">
    <property type="entry name" value="Znf_C2H2_sf"/>
</dbReference>
<dbReference type="InterPro" id="IPR013087">
    <property type="entry name" value="Znf_C2H2_type"/>
</dbReference>
<dbReference type="PANTHER" id="PTHR24376">
    <property type="entry name" value="ZINC FINGER PROTEIN"/>
    <property type="match status" value="1"/>
</dbReference>
<dbReference type="PANTHER" id="PTHR24376:SF233">
    <property type="entry name" value="ZINC FINGER PROTEIN 268-RELATED"/>
    <property type="match status" value="1"/>
</dbReference>
<dbReference type="Pfam" id="PF01352">
    <property type="entry name" value="KRAB"/>
    <property type="match status" value="1"/>
</dbReference>
<dbReference type="Pfam" id="PF00096">
    <property type="entry name" value="zf-C2H2"/>
    <property type="match status" value="16"/>
</dbReference>
<dbReference type="SMART" id="SM00349">
    <property type="entry name" value="KRAB"/>
    <property type="match status" value="1"/>
</dbReference>
<dbReference type="SMART" id="SM00355">
    <property type="entry name" value="ZnF_C2H2"/>
    <property type="match status" value="19"/>
</dbReference>
<dbReference type="SUPFAM" id="SSF57667">
    <property type="entry name" value="beta-beta-alpha zinc fingers"/>
    <property type="match status" value="12"/>
</dbReference>
<dbReference type="SUPFAM" id="SSF109640">
    <property type="entry name" value="KRAB domain (Kruppel-associated box)"/>
    <property type="match status" value="1"/>
</dbReference>
<dbReference type="PROSITE" id="PS50805">
    <property type="entry name" value="KRAB"/>
    <property type="match status" value="1"/>
</dbReference>
<dbReference type="PROSITE" id="PS00028">
    <property type="entry name" value="ZINC_FINGER_C2H2_1"/>
    <property type="match status" value="18"/>
</dbReference>
<dbReference type="PROSITE" id="PS50157">
    <property type="entry name" value="ZINC_FINGER_C2H2_2"/>
    <property type="match status" value="19"/>
</dbReference>
<feature type="chain" id="PRO_0000333738" description="Zinc finger protein 717">
    <location>
        <begin position="1"/>
        <end position="914"/>
    </location>
</feature>
<feature type="domain" description="KRAB" evidence="3">
    <location>
        <begin position="22"/>
        <end position="93"/>
    </location>
</feature>
<feature type="zinc finger region" description="C2H2-type 1; degenerate" evidence="2">
    <location>
        <begin position="209"/>
        <end position="231"/>
    </location>
</feature>
<feature type="zinc finger region" description="C2H2-type 2; degenerate" evidence="2">
    <location>
        <begin position="266"/>
        <end position="277"/>
    </location>
</feature>
<feature type="zinc finger region" description="C2H2-type 3; degenerate" evidence="2">
    <location>
        <begin position="283"/>
        <end position="305"/>
    </location>
</feature>
<feature type="zinc finger region" description="C2H2-type 4" evidence="2">
    <location>
        <begin position="311"/>
        <end position="333"/>
    </location>
</feature>
<feature type="zinc finger region" description="C2H2-type 5" evidence="2">
    <location>
        <begin position="339"/>
        <end position="361"/>
    </location>
</feature>
<feature type="zinc finger region" description="C2H2-type 6" evidence="2">
    <location>
        <begin position="367"/>
        <end position="389"/>
    </location>
</feature>
<feature type="zinc finger region" description="C2H2-type 7" evidence="2">
    <location>
        <begin position="395"/>
        <end position="417"/>
    </location>
</feature>
<feature type="zinc finger region" description="C2H2-type 8" evidence="2">
    <location>
        <begin position="423"/>
        <end position="445"/>
    </location>
</feature>
<feature type="zinc finger region" description="C2H2-type 9" evidence="2">
    <location>
        <begin position="451"/>
        <end position="473"/>
    </location>
</feature>
<feature type="zinc finger region" description="C2H2-type 10" evidence="2">
    <location>
        <begin position="479"/>
        <end position="501"/>
    </location>
</feature>
<feature type="zinc finger region" description="C2H2-type 11" evidence="2">
    <location>
        <begin position="507"/>
        <end position="529"/>
    </location>
</feature>
<feature type="zinc finger region" description="C2H2-type 12" evidence="2">
    <location>
        <begin position="535"/>
        <end position="557"/>
    </location>
</feature>
<feature type="zinc finger region" description="C2H2-type 13" evidence="2">
    <location>
        <begin position="563"/>
        <end position="585"/>
    </location>
</feature>
<feature type="zinc finger region" description="C2H2-type 14" evidence="2">
    <location>
        <begin position="591"/>
        <end position="613"/>
    </location>
</feature>
<feature type="zinc finger region" description="C2H2-type 15" evidence="2">
    <location>
        <begin position="619"/>
        <end position="641"/>
    </location>
</feature>
<feature type="zinc finger region" description="C2H2-type 16; degenerate" evidence="2">
    <location>
        <begin position="649"/>
        <end position="669"/>
    </location>
</feature>
<feature type="zinc finger region" description="C2H2-type 17; degenerate" evidence="2">
    <location>
        <begin position="741"/>
        <end position="752"/>
    </location>
</feature>
<feature type="zinc finger region" description="C2H2-type 18" evidence="2">
    <location>
        <begin position="758"/>
        <end position="780"/>
    </location>
</feature>
<feature type="zinc finger region" description="C2H2-type 19" evidence="2">
    <location>
        <begin position="786"/>
        <end position="808"/>
    </location>
</feature>
<feature type="zinc finger region" description="C2H2-type 20" evidence="2">
    <location>
        <begin position="814"/>
        <end position="836"/>
    </location>
</feature>
<feature type="zinc finger region" description="C2H2-type 21" evidence="2">
    <location>
        <begin position="842"/>
        <end position="864"/>
    </location>
</feature>
<feature type="zinc finger region" description="C2H2-type 22" evidence="2">
    <location>
        <begin position="870"/>
        <end position="892"/>
    </location>
</feature>
<feature type="sequence conflict" description="In Ref. 2; AAK28319." evidence="4" ref="2">
    <original>R</original>
    <variation>I</variation>
    <location>
        <position position="611"/>
    </location>
</feature>
<feature type="sequence conflict" description="In Ref. 2; AAK28319." evidence="4" ref="2">
    <location>
        <begin position="650"/>
        <end position="652"/>
    </location>
</feature>
<feature type="sequence conflict" description="In Ref. 2; AAK28319." evidence="4" ref="2">
    <original>R</original>
    <variation>H</variation>
    <location>
        <position position="674"/>
    </location>
</feature>
<feature type="sequence conflict" description="In Ref. 2; AAK28319." evidence="4" ref="2">
    <original>T</original>
    <variation>A</variation>
    <location>
        <position position="697"/>
    </location>
</feature>
<sequence length="914" mass="106536">MFPVFSGCFQELQEKNKSLELVSFEEVAVHFTWEEWQDLDDAQRTLYRDVMLETYSSLVSLGHYITKPEMIFKLEQGAEPWIVEETPNLRLSAVQIIDDLIERSHESHDRFFWQIVITNSNTSTQERVELGKTFNLNSNHVLNLIINNGNSSGMKPGQFNDCQNMLFPIKPGETQSGEKPHVCDITRRSHRHHEHLTQHHKIQTLLQTFQCNEQGKTFNTEAMFFIHKRVHIVQTFGKYNEYEKACNNSAVIVQVITQVGQPTCCRKSDFTKHQQTHTGEKPYECVECEKPSISKSDLMLQCKMPTEEKPYACNWCEKLFSYKSSLIIHQRIHTGEKPYGCNECGKTFRRKSFLTLHERTHTGDKPYKCIECGKTFHCKSLLTLHHRTHSGEKPYQCSECGKTFSQKSYLTIHHRTHTGEKPYACDHCEEAFSHKSRLTVHQRTHTGEKPYECNECGKPFINKSNLRLHQRTHTGEKPYECNECGKTFHRKSFLTIHQWTHTGEKPYECNECGKTFRCKSFLTVHQRTHAGEKPYACNECGKTYSHKSYLTVHHRTHTGEKPYECNECGKSFHCKSFLTIHQRTHAGKKPYECNECEKTFINKLNLGIHKRTHTGERPYECNECGKTFRQKSNLSTHQGTHTGEKPYVCNECGKTFHRKSFLTIHQRTHTGKNRMDVMNVEKLFVRNHTLLYIRELTPGKSPMNVMNVENPFIRRQIFRSIKVFTRGRNPMNVANVEKPCQKSVLTVHHRTHTGEKPYECNECGKTFCHKSNLSTHQGTHSGEKPYECDECRKTFYDKTVLTIHQRTHTGEKPFECKECRKTFSQKSKLFVHHRTHTGEKPFRCNECRKTFSQKSGLSIHQRTHTGEKPYECKECGKTFCQKSHLSRHQQTHIGEKSDVAEAGYVFPQNHSFFP</sequence>
<gene>
    <name evidence="5" type="primary">ZNF717</name>
</gene>
<accession>Q9BY31</accession>
<accession>A0A494C0W3</accession>
<comment type="function">
    <text evidence="1">May be involved in transcriptional regulation.</text>
</comment>
<comment type="subcellular location">
    <subcellularLocation>
        <location evidence="4">Nucleus</location>
    </subcellularLocation>
</comment>
<comment type="similarity">
    <text evidence="4">Belongs to the krueppel C2H2-type zinc-finger protein family.</text>
</comment>
<comment type="sequence caution" evidence="4">
    <conflict type="frameshift">
        <sequence resource="EMBL-CDS" id="AAK28319"/>
    </conflict>
</comment>
<name>ZN717_HUMAN</name>
<evidence type="ECO:0000250" key="1"/>
<evidence type="ECO:0000255" key="2">
    <source>
        <dbReference type="PROSITE-ProRule" id="PRU00042"/>
    </source>
</evidence>
<evidence type="ECO:0000255" key="3">
    <source>
        <dbReference type="PROSITE-ProRule" id="PRU00119"/>
    </source>
</evidence>
<evidence type="ECO:0000305" key="4"/>
<evidence type="ECO:0000312" key="5">
    <source>
        <dbReference type="HGNC" id="HGNC:29448"/>
    </source>
</evidence>
<proteinExistence type="evidence at protein level"/>
<organism>
    <name type="scientific">Homo sapiens</name>
    <name type="common">Human</name>
    <dbReference type="NCBI Taxonomy" id="9606"/>
    <lineage>
        <taxon>Eukaryota</taxon>
        <taxon>Metazoa</taxon>
        <taxon>Chordata</taxon>
        <taxon>Craniata</taxon>
        <taxon>Vertebrata</taxon>
        <taxon>Euteleostomi</taxon>
        <taxon>Mammalia</taxon>
        <taxon>Eutheria</taxon>
        <taxon>Euarchontoglires</taxon>
        <taxon>Primates</taxon>
        <taxon>Haplorrhini</taxon>
        <taxon>Catarrhini</taxon>
        <taxon>Hominidae</taxon>
        <taxon>Homo</taxon>
    </lineage>
</organism>